<dbReference type="EMBL" id="CP000716">
    <property type="protein sequence ID" value="ABR30503.1"/>
    <property type="molecule type" value="Genomic_DNA"/>
</dbReference>
<dbReference type="RefSeq" id="WP_012056864.1">
    <property type="nucleotide sequence ID" value="NC_009616.1"/>
</dbReference>
<dbReference type="SMR" id="A6LKQ2"/>
<dbReference type="STRING" id="391009.Tmel_0639"/>
<dbReference type="KEGG" id="tme:Tmel_0639"/>
<dbReference type="eggNOG" id="COG0267">
    <property type="taxonomic scope" value="Bacteria"/>
</dbReference>
<dbReference type="HOGENOM" id="CLU_190949_0_1_0"/>
<dbReference type="OrthoDB" id="9801333at2"/>
<dbReference type="Proteomes" id="UP000001110">
    <property type="component" value="Chromosome"/>
</dbReference>
<dbReference type="GO" id="GO:0005737">
    <property type="term" value="C:cytoplasm"/>
    <property type="evidence" value="ECO:0007669"/>
    <property type="project" value="UniProtKB-ARBA"/>
</dbReference>
<dbReference type="GO" id="GO:1990904">
    <property type="term" value="C:ribonucleoprotein complex"/>
    <property type="evidence" value="ECO:0007669"/>
    <property type="project" value="UniProtKB-KW"/>
</dbReference>
<dbReference type="GO" id="GO:0005840">
    <property type="term" value="C:ribosome"/>
    <property type="evidence" value="ECO:0007669"/>
    <property type="project" value="UniProtKB-KW"/>
</dbReference>
<dbReference type="GO" id="GO:0003735">
    <property type="term" value="F:structural constituent of ribosome"/>
    <property type="evidence" value="ECO:0007669"/>
    <property type="project" value="InterPro"/>
</dbReference>
<dbReference type="GO" id="GO:0006412">
    <property type="term" value="P:translation"/>
    <property type="evidence" value="ECO:0007669"/>
    <property type="project" value="UniProtKB-UniRule"/>
</dbReference>
<dbReference type="Gene3D" id="2.20.28.120">
    <property type="entry name" value="Ribosomal protein L33"/>
    <property type="match status" value="1"/>
</dbReference>
<dbReference type="HAMAP" id="MF_00294">
    <property type="entry name" value="Ribosomal_bL33"/>
    <property type="match status" value="1"/>
</dbReference>
<dbReference type="InterPro" id="IPR001705">
    <property type="entry name" value="Ribosomal_bL33"/>
</dbReference>
<dbReference type="InterPro" id="IPR038584">
    <property type="entry name" value="Ribosomal_bL33_sf"/>
</dbReference>
<dbReference type="InterPro" id="IPR011332">
    <property type="entry name" value="Ribosomal_zn-bd"/>
</dbReference>
<dbReference type="NCBIfam" id="NF001764">
    <property type="entry name" value="PRK00504.1"/>
    <property type="match status" value="1"/>
</dbReference>
<dbReference type="NCBIfam" id="NF001860">
    <property type="entry name" value="PRK00595.1"/>
    <property type="match status" value="1"/>
</dbReference>
<dbReference type="NCBIfam" id="TIGR01023">
    <property type="entry name" value="rpmG_bact"/>
    <property type="match status" value="1"/>
</dbReference>
<dbReference type="PANTHER" id="PTHR43168">
    <property type="entry name" value="50S RIBOSOMAL PROTEIN L33, CHLOROPLASTIC"/>
    <property type="match status" value="1"/>
</dbReference>
<dbReference type="PANTHER" id="PTHR43168:SF6">
    <property type="entry name" value="LARGE RIBOSOMAL SUBUNIT PROTEIN BL33A"/>
    <property type="match status" value="1"/>
</dbReference>
<dbReference type="Pfam" id="PF00471">
    <property type="entry name" value="Ribosomal_L33"/>
    <property type="match status" value="1"/>
</dbReference>
<dbReference type="SUPFAM" id="SSF57829">
    <property type="entry name" value="Zn-binding ribosomal proteins"/>
    <property type="match status" value="1"/>
</dbReference>
<keyword id="KW-0687">Ribonucleoprotein</keyword>
<keyword id="KW-0689">Ribosomal protein</keyword>
<proteinExistence type="inferred from homology"/>
<sequence length="49" mass="5817">MRIQVALKCSECGNKNYYTTREKNKKEKLSLRKYCPKCNKHTVHNETKA</sequence>
<reference key="1">
    <citation type="submission" date="2007-05" db="EMBL/GenBank/DDBJ databases">
        <title>Complete sequence of Thermosipho melanesiensis BI429.</title>
        <authorList>
            <consortium name="US DOE Joint Genome Institute"/>
            <person name="Copeland A."/>
            <person name="Lucas S."/>
            <person name="Lapidus A."/>
            <person name="Barry K."/>
            <person name="Glavina del Rio T."/>
            <person name="Dalin E."/>
            <person name="Tice H."/>
            <person name="Pitluck S."/>
            <person name="Chertkov O."/>
            <person name="Brettin T."/>
            <person name="Bruce D."/>
            <person name="Detter J.C."/>
            <person name="Han C."/>
            <person name="Schmutz J."/>
            <person name="Larimer F."/>
            <person name="Land M."/>
            <person name="Hauser L."/>
            <person name="Kyrpides N."/>
            <person name="Mikhailova N."/>
            <person name="Nelson K."/>
            <person name="Gogarten J.P."/>
            <person name="Noll K."/>
            <person name="Richardson P."/>
        </authorList>
    </citation>
    <scope>NUCLEOTIDE SEQUENCE [LARGE SCALE GENOMIC DNA]</scope>
    <source>
        <strain>DSM 12029 / CIP 104789 / BI429</strain>
    </source>
</reference>
<protein>
    <recommendedName>
        <fullName evidence="1">Large ribosomal subunit protein bL33</fullName>
    </recommendedName>
    <alternativeName>
        <fullName evidence="2">50S ribosomal protein L33</fullName>
    </alternativeName>
</protein>
<organism>
    <name type="scientific">Thermosipho melanesiensis (strain DSM 12029 / CIP 104789 / BI429)</name>
    <dbReference type="NCBI Taxonomy" id="391009"/>
    <lineage>
        <taxon>Bacteria</taxon>
        <taxon>Thermotogati</taxon>
        <taxon>Thermotogota</taxon>
        <taxon>Thermotogae</taxon>
        <taxon>Thermotogales</taxon>
        <taxon>Fervidobacteriaceae</taxon>
        <taxon>Thermosipho</taxon>
    </lineage>
</organism>
<comment type="similarity">
    <text evidence="1">Belongs to the bacterial ribosomal protein bL33 family.</text>
</comment>
<evidence type="ECO:0000255" key="1">
    <source>
        <dbReference type="HAMAP-Rule" id="MF_00294"/>
    </source>
</evidence>
<evidence type="ECO:0000305" key="2"/>
<accession>A6LKQ2</accession>
<name>RL33_THEM4</name>
<feature type="chain" id="PRO_0000356764" description="Large ribosomal subunit protein bL33">
    <location>
        <begin position="1"/>
        <end position="49"/>
    </location>
</feature>
<gene>
    <name evidence="1" type="primary">rpmG</name>
    <name type="ordered locus">Tmel_0639</name>
</gene>